<reference key="1">
    <citation type="journal article" date="1990" name="Proc. Natl. Acad. Sci. U.S.A.">
        <title>Rat mitochondrial and cytosolic 3-hydroxy-3-methylglutaryl-CoA synthases are encoded by two different genes.</title>
        <authorList>
            <person name="Ayte J."/>
            <person name="Gil-Gomez G."/>
            <person name="Haro D."/>
            <person name="Marrero P.F."/>
            <person name="Hegardt F.G."/>
        </authorList>
    </citation>
    <scope>NUCLEOTIDE SEQUENCE [MRNA]</scope>
    <scope>SUBCELLULAR LOCATION</scope>
    <scope>TISSUE SPECIFICITY</scope>
    <source>
        <strain>Sprague-Dawley</strain>
        <tissue>Liver</tissue>
    </source>
</reference>
<reference key="2">
    <citation type="journal article" date="1993" name="Eur. J. Biochem.">
        <title>The rat mitochondrial 3-hydroxy-3-methylglutaryl-coenzyme-A-synthase gene contains elements that mediate its multihormonal regulation and tissue specificity.</title>
        <authorList>
            <person name="Gil-Gomez G."/>
            <person name="Ayte J."/>
            <person name="Hegardt F.G."/>
        </authorList>
    </citation>
    <scope>NUCLEOTIDE SEQUENCE [GENOMIC DNA] OF 1-35</scope>
</reference>
<reference key="3">
    <citation type="journal article" date="2012" name="Nat. Commun.">
        <title>Quantitative maps of protein phosphorylation sites across 14 different rat organs and tissues.</title>
        <authorList>
            <person name="Lundby A."/>
            <person name="Secher A."/>
            <person name="Lage K."/>
            <person name="Nordsborg N.B."/>
            <person name="Dmytriyev A."/>
            <person name="Lundby C."/>
            <person name="Olsen J.V."/>
        </authorList>
    </citation>
    <scope>PHOSPHORYLATION [LARGE SCALE ANALYSIS] AT SER-440 AND SER-477</scope>
    <scope>IDENTIFICATION BY MASS SPECTROMETRY [LARGE SCALE ANALYSIS]</scope>
</reference>
<reference key="4">
    <citation type="journal article" date="2004" name="Nature">
        <title>Genome sequence of the Brown Norway rat yields insights into mammalian evolution.</title>
        <authorList>
            <person name="Gibbs R.A."/>
            <person name="Weinstock G.M."/>
            <person name="Metzker M.L."/>
            <person name="Muzny D.M."/>
            <person name="Sodergren E.J."/>
            <person name="Scherer S."/>
            <person name="Scott G."/>
            <person name="Steffen D."/>
            <person name="Worley K.C."/>
            <person name="Burch P.E."/>
            <person name="Okwuonu G."/>
            <person name="Hines S."/>
            <person name="Lewis L."/>
            <person name="Deramo C."/>
            <person name="Delgado O."/>
            <person name="Dugan-Rocha S."/>
            <person name="Miner G."/>
            <person name="Morgan M."/>
            <person name="Hawes A."/>
            <person name="Gill R."/>
            <person name="Holt R.A."/>
            <person name="Adams M.D."/>
            <person name="Amanatides P.G."/>
            <person name="Baden-Tillson H."/>
            <person name="Barnstead M."/>
            <person name="Chin S."/>
            <person name="Evans C.A."/>
            <person name="Ferriera S."/>
            <person name="Fosler C."/>
            <person name="Glodek A."/>
            <person name="Gu Z."/>
            <person name="Jennings D."/>
            <person name="Kraft C.L."/>
            <person name="Nguyen T."/>
            <person name="Pfannkoch C.M."/>
            <person name="Sitter C."/>
            <person name="Sutton G.G."/>
            <person name="Venter J.C."/>
            <person name="Woodage T."/>
            <person name="Smith D."/>
            <person name="Lee H.-M."/>
            <person name="Gustafson E."/>
            <person name="Cahill P."/>
            <person name="Kana A."/>
            <person name="Doucette-Stamm L."/>
            <person name="Weinstock K."/>
            <person name="Fechtel K."/>
            <person name="Weiss R.B."/>
            <person name="Dunn D.M."/>
            <person name="Green E.D."/>
            <person name="Blakesley R.W."/>
            <person name="Bouffard G.G."/>
            <person name="De Jong P.J."/>
            <person name="Osoegawa K."/>
            <person name="Zhu B."/>
            <person name="Marra M."/>
            <person name="Schein J."/>
            <person name="Bosdet I."/>
            <person name="Fjell C."/>
            <person name="Jones S."/>
            <person name="Krzywinski M."/>
            <person name="Mathewson C."/>
            <person name="Siddiqui A."/>
            <person name="Wye N."/>
            <person name="McPherson J."/>
            <person name="Zhao S."/>
            <person name="Fraser C.M."/>
            <person name="Shetty J."/>
            <person name="Shatsman S."/>
            <person name="Geer K."/>
            <person name="Chen Y."/>
            <person name="Abramzon S."/>
            <person name="Nierman W.C."/>
            <person name="Havlak P.H."/>
            <person name="Chen R."/>
            <person name="Durbin K.J."/>
            <person name="Egan A."/>
            <person name="Ren Y."/>
            <person name="Song X.-Z."/>
            <person name="Li B."/>
            <person name="Liu Y."/>
            <person name="Qin X."/>
            <person name="Cawley S."/>
            <person name="Cooney A.J."/>
            <person name="D'Souza L.M."/>
            <person name="Martin K."/>
            <person name="Wu J.Q."/>
            <person name="Gonzalez-Garay M.L."/>
            <person name="Jackson A.R."/>
            <person name="Kalafus K.J."/>
            <person name="McLeod M.P."/>
            <person name="Milosavljevic A."/>
            <person name="Virk D."/>
            <person name="Volkov A."/>
            <person name="Wheeler D.A."/>
            <person name="Zhang Z."/>
            <person name="Bailey J.A."/>
            <person name="Eichler E.E."/>
            <person name="Tuzun E."/>
            <person name="Birney E."/>
            <person name="Mongin E."/>
            <person name="Ureta-Vidal A."/>
            <person name="Woodwark C."/>
            <person name="Zdobnov E."/>
            <person name="Bork P."/>
            <person name="Suyama M."/>
            <person name="Torrents D."/>
            <person name="Alexandersson M."/>
            <person name="Trask B.J."/>
            <person name="Young J.M."/>
            <person name="Huang H."/>
            <person name="Wang H."/>
            <person name="Xing H."/>
            <person name="Daniels S."/>
            <person name="Gietzen D."/>
            <person name="Schmidt J."/>
            <person name="Stevens K."/>
            <person name="Vitt U."/>
            <person name="Wingrove J."/>
            <person name="Camara F."/>
            <person name="Mar Alba M."/>
            <person name="Abril J.F."/>
            <person name="Guigo R."/>
            <person name="Smit A."/>
            <person name="Dubchak I."/>
            <person name="Rubin E.M."/>
            <person name="Couronne O."/>
            <person name="Poliakov A."/>
            <person name="Huebner N."/>
            <person name="Ganten D."/>
            <person name="Goesele C."/>
            <person name="Hummel O."/>
            <person name="Kreitler T."/>
            <person name="Lee Y.-A."/>
            <person name="Monti J."/>
            <person name="Schulz H."/>
            <person name="Zimdahl H."/>
            <person name="Himmelbauer H."/>
            <person name="Lehrach H."/>
            <person name="Jacob H.J."/>
            <person name="Bromberg S."/>
            <person name="Gullings-Handley J."/>
            <person name="Jensen-Seaman M.I."/>
            <person name="Kwitek A.E."/>
            <person name="Lazar J."/>
            <person name="Pasko D."/>
            <person name="Tonellato P.J."/>
            <person name="Twigger S."/>
            <person name="Ponting C.P."/>
            <person name="Duarte J.M."/>
            <person name="Rice S."/>
            <person name="Goodstadt L."/>
            <person name="Beatson S.A."/>
            <person name="Emes R.D."/>
            <person name="Winter E.E."/>
            <person name="Webber C."/>
            <person name="Brandt P."/>
            <person name="Nyakatura G."/>
            <person name="Adetobi M."/>
            <person name="Chiaromonte F."/>
            <person name="Elnitski L."/>
            <person name="Eswara P."/>
            <person name="Hardison R.C."/>
            <person name="Hou M."/>
            <person name="Kolbe D."/>
            <person name="Makova K."/>
            <person name="Miller W."/>
            <person name="Nekrutenko A."/>
            <person name="Riemer C."/>
            <person name="Schwartz S."/>
            <person name="Taylor J."/>
            <person name="Yang S."/>
            <person name="Zhang Y."/>
            <person name="Lindpaintner K."/>
            <person name="Andrews T.D."/>
            <person name="Caccamo M."/>
            <person name="Clamp M."/>
            <person name="Clarke L."/>
            <person name="Curwen V."/>
            <person name="Durbin R.M."/>
            <person name="Eyras E."/>
            <person name="Searle S.M."/>
            <person name="Cooper G.M."/>
            <person name="Batzoglou S."/>
            <person name="Brudno M."/>
            <person name="Sidow A."/>
            <person name="Stone E.A."/>
            <person name="Payseur B.A."/>
            <person name="Bourque G."/>
            <person name="Lopez-Otin C."/>
            <person name="Puente X.S."/>
            <person name="Chakrabarti K."/>
            <person name="Chatterji S."/>
            <person name="Dewey C."/>
            <person name="Pachter L."/>
            <person name="Bray N."/>
            <person name="Yap V.B."/>
            <person name="Caspi A."/>
            <person name="Tesler G."/>
            <person name="Pevzner P.A."/>
            <person name="Haussler D."/>
            <person name="Roskin K.M."/>
            <person name="Baertsch R."/>
            <person name="Clawson H."/>
            <person name="Furey T.S."/>
            <person name="Hinrichs A.S."/>
            <person name="Karolchik D."/>
            <person name="Kent W.J."/>
            <person name="Rosenbloom K.R."/>
            <person name="Trumbower H."/>
            <person name="Weirauch M."/>
            <person name="Cooper D.N."/>
            <person name="Stenson P.D."/>
            <person name="Ma B."/>
            <person name="Brent M."/>
            <person name="Arumugam M."/>
            <person name="Shteynberg D."/>
            <person name="Copley R.R."/>
            <person name="Taylor M.S."/>
            <person name="Riethman H."/>
            <person name="Mudunuri U."/>
            <person name="Peterson J."/>
            <person name="Guyer M."/>
            <person name="Felsenfeld A."/>
            <person name="Old S."/>
            <person name="Mockrin S."/>
            <person name="Collins F.S."/>
        </authorList>
    </citation>
    <scope>NUCLEOTIDE SEQUENCE [LARGE SCALE GENOMIC DNA]</scope>
    <source>
        <strain>Brown Norway</strain>
    </source>
</reference>
<reference key="5">
    <citation type="submission" date="2005-09" db="EMBL/GenBank/DDBJ databases">
        <authorList>
            <person name="Mural R.J."/>
            <person name="Adams M.D."/>
            <person name="Myers E.W."/>
            <person name="Smith H.O."/>
            <person name="Venter J.C."/>
        </authorList>
    </citation>
    <scope>NUCLEOTIDE SEQUENCE [LARGE SCALE GENOMIC DNA]</scope>
</reference>
<reference key="6">
    <citation type="journal article" date="2004" name="Genome Res.">
        <title>The status, quality, and expansion of the NIH full-length cDNA project: the Mammalian Gene Collection (MGC).</title>
        <authorList>
            <consortium name="The MGC Project Team"/>
        </authorList>
    </citation>
    <scope>NUCLEOTIDE SEQUENCE [LARGE SCALE MRNA]</scope>
    <source>
        <tissue>Testis</tissue>
    </source>
</reference>
<gene>
    <name type="primary">Hmgcs2</name>
</gene>
<keyword id="KW-0007">Acetylation</keyword>
<keyword id="KW-0152">Cholesterol biosynthesis</keyword>
<keyword id="KW-0153">Cholesterol metabolism</keyword>
<keyword id="KW-0444">Lipid biosynthesis</keyword>
<keyword id="KW-0443">Lipid metabolism</keyword>
<keyword id="KW-0496">Mitochondrion</keyword>
<keyword id="KW-0597">Phosphoprotein</keyword>
<keyword id="KW-1185">Reference proteome</keyword>
<keyword id="KW-0752">Steroid biosynthesis</keyword>
<keyword id="KW-0753">Steroid metabolism</keyword>
<keyword id="KW-0756">Sterol biosynthesis</keyword>
<keyword id="KW-1207">Sterol metabolism</keyword>
<keyword id="KW-0808">Transferase</keyword>
<keyword id="KW-0809">Transit peptide</keyword>
<protein>
    <recommendedName>
        <fullName>Hydroxymethylglutaryl-CoA synthase, mitochondrial</fullName>
        <shortName>HMG-CoA synthase</shortName>
        <ecNumber evidence="1">2.3.3.10</ecNumber>
    </recommendedName>
    <alternativeName>
        <fullName>3-hydroxy-3-methylglutaryl coenzyme A synthase</fullName>
    </alternativeName>
</protein>
<evidence type="ECO:0000250" key="1">
    <source>
        <dbReference type="UniProtKB" id="P54868"/>
    </source>
</evidence>
<evidence type="ECO:0000250" key="2">
    <source>
        <dbReference type="UniProtKB" id="P54869"/>
    </source>
</evidence>
<evidence type="ECO:0000250" key="3">
    <source>
        <dbReference type="UniProtKB" id="Q2KIE6"/>
    </source>
</evidence>
<evidence type="ECO:0000255" key="4">
    <source>
        <dbReference type="PROSITE-ProRule" id="PRU10116"/>
    </source>
</evidence>
<evidence type="ECO:0000269" key="5">
    <source>
    </source>
</evidence>
<evidence type="ECO:0000305" key="6"/>
<evidence type="ECO:0000305" key="7">
    <source>
    </source>
</evidence>
<evidence type="ECO:0007744" key="8">
    <source>
    </source>
</evidence>
<name>HMCS2_RAT</name>
<feature type="transit peptide" description="Mitochondrion" evidence="6">
    <location>
        <begin position="1"/>
        <end position="37"/>
    </location>
</feature>
<feature type="chain" id="PRO_0000013486" description="Hydroxymethylglutaryl-CoA synthase, mitochondrial">
    <location>
        <begin position="38"/>
        <end position="508"/>
    </location>
</feature>
<feature type="active site" description="Proton donor/acceptor" evidence="4">
    <location>
        <position position="132"/>
    </location>
</feature>
<feature type="active site" description="Acyl-thioester intermediate" evidence="4">
    <location>
        <position position="166"/>
    </location>
</feature>
<feature type="active site" description="Proton donor/acceptor" evidence="4">
    <location>
        <position position="301"/>
    </location>
</feature>
<feature type="binding site" evidence="1">
    <location>
        <position position="80"/>
    </location>
    <ligand>
        <name>(3S)-3-hydroxy-3-methylglutaryl-CoA</name>
        <dbReference type="ChEBI" id="CHEBI:43074"/>
    </ligand>
</feature>
<feature type="binding site" evidence="1">
    <location>
        <position position="81"/>
    </location>
    <ligand>
        <name>(3S)-3-hydroxy-3-methylglutaryl-CoA</name>
        <dbReference type="ChEBI" id="CHEBI:43074"/>
    </ligand>
</feature>
<feature type="binding site" evidence="1">
    <location>
        <position position="166"/>
    </location>
    <ligand>
        <name>(3S)-3-hydroxy-3-methylglutaryl-CoA</name>
        <dbReference type="ChEBI" id="CHEBI:43074"/>
    </ligand>
</feature>
<feature type="binding site" evidence="1">
    <location>
        <position position="204"/>
    </location>
    <ligand>
        <name>(3S)-3-hydroxy-3-methylglutaryl-CoA</name>
        <dbReference type="ChEBI" id="CHEBI:43074"/>
    </ligand>
</feature>
<feature type="binding site" evidence="1">
    <location>
        <position position="208"/>
    </location>
    <ligand>
        <name>(3S)-3-hydroxy-3-methylglutaryl-CoA</name>
        <dbReference type="ChEBI" id="CHEBI:43074"/>
    </ligand>
</feature>
<feature type="binding site" evidence="1">
    <location>
        <position position="258"/>
    </location>
    <ligand>
        <name>(3S)-3-hydroxy-3-methylglutaryl-CoA</name>
        <dbReference type="ChEBI" id="CHEBI:43074"/>
    </ligand>
</feature>
<feature type="binding site" evidence="1">
    <location>
        <position position="301"/>
    </location>
    <ligand>
        <name>(3S)-3-hydroxy-3-methylglutaryl-CoA</name>
        <dbReference type="ChEBI" id="CHEBI:43074"/>
    </ligand>
</feature>
<feature type="binding site" evidence="1">
    <location>
        <position position="310"/>
    </location>
    <ligand>
        <name>(3S)-3-hydroxy-3-methylglutaryl-CoA</name>
        <dbReference type="ChEBI" id="CHEBI:43074"/>
    </ligand>
</feature>
<feature type="binding site" evidence="1">
    <location>
        <position position="380"/>
    </location>
    <ligand>
        <name>(3S)-3-hydroxy-3-methylglutaryl-CoA</name>
        <dbReference type="ChEBI" id="CHEBI:43074"/>
    </ligand>
</feature>
<feature type="binding site" evidence="1">
    <location>
        <position position="414"/>
    </location>
    <ligand>
        <name>(3S)-3-hydroxy-3-methylglutaryl-CoA</name>
        <dbReference type="ChEBI" id="CHEBI:43074"/>
    </ligand>
</feature>
<feature type="modified residue" description="N6-succinyllysine" evidence="2">
    <location>
        <position position="52"/>
    </location>
</feature>
<feature type="modified residue" description="N6-acetyllysine; alternate" evidence="2">
    <location>
        <position position="83"/>
    </location>
</feature>
<feature type="modified residue" description="N6-succinyllysine; alternate" evidence="2">
    <location>
        <position position="83"/>
    </location>
</feature>
<feature type="modified residue" description="N6-acetyllysine; alternate" evidence="2">
    <location>
        <position position="118"/>
    </location>
</feature>
<feature type="modified residue" description="N6-succinyllysine; alternate" evidence="2">
    <location>
        <position position="118"/>
    </location>
</feature>
<feature type="modified residue" description="N6-succinyllysine" evidence="2">
    <location>
        <position position="221"/>
    </location>
</feature>
<feature type="modified residue" description="N6-acetyllysine" evidence="2">
    <location>
        <position position="243"/>
    </location>
</feature>
<feature type="modified residue" description="N6-acetyllysine; alternate" evidence="2">
    <location>
        <position position="256"/>
    </location>
</feature>
<feature type="modified residue" description="N6-succinyllysine; alternate" evidence="2">
    <location>
        <position position="256"/>
    </location>
</feature>
<feature type="modified residue" description="N6-acetyllysine" evidence="2">
    <location>
        <position position="306"/>
    </location>
</feature>
<feature type="modified residue" description="N6-acetyllysine; alternate" evidence="2">
    <location>
        <position position="310"/>
    </location>
</feature>
<feature type="modified residue" description="N6-succinyllysine; alternate" evidence="3">
    <location>
        <position position="310"/>
    </location>
</feature>
<feature type="modified residue" description="N6-acetyllysine; alternate" evidence="2">
    <location>
        <position position="327"/>
    </location>
</feature>
<feature type="modified residue" description="N6-succinyllysine; alternate" evidence="2">
    <location>
        <position position="327"/>
    </location>
</feature>
<feature type="modified residue" description="N6-succinyllysine" evidence="2">
    <location>
        <position position="333"/>
    </location>
</feature>
<feature type="modified residue" description="N6-acetyllysine; alternate" evidence="2">
    <location>
        <position position="342"/>
    </location>
</feature>
<feature type="modified residue" description="N6-succinyllysine; alternate" evidence="2">
    <location>
        <position position="342"/>
    </location>
</feature>
<feature type="modified residue" description="N6-acetyllysine; alternate" evidence="2">
    <location>
        <position position="350"/>
    </location>
</feature>
<feature type="modified residue" description="N6-succinyllysine; alternate" evidence="2">
    <location>
        <position position="350"/>
    </location>
</feature>
<feature type="modified residue" description="N6-acetyllysine; alternate" evidence="2">
    <location>
        <position position="354"/>
    </location>
</feature>
<feature type="modified residue" description="N6-succinyllysine; alternate" evidence="2">
    <location>
        <position position="354"/>
    </location>
</feature>
<feature type="modified residue" description="N6-acetyllysine; alternate" evidence="2">
    <location>
        <position position="358"/>
    </location>
</feature>
<feature type="modified residue" description="N6-succinyllysine; alternate" evidence="2">
    <location>
        <position position="358"/>
    </location>
</feature>
<feature type="modified residue" description="N6-acetyllysine" evidence="2">
    <location>
        <position position="427"/>
    </location>
</feature>
<feature type="modified residue" description="Phosphoserine" evidence="1">
    <location>
        <position position="433"/>
    </location>
</feature>
<feature type="modified residue" description="N6-acetyllysine" evidence="2">
    <location>
        <position position="437"/>
    </location>
</feature>
<feature type="modified residue" description="Phosphoserine" evidence="8">
    <location>
        <position position="440"/>
    </location>
</feature>
<feature type="modified residue" description="N6-acetyllysine; alternate" evidence="2">
    <location>
        <position position="447"/>
    </location>
</feature>
<feature type="modified residue" description="N6-succinyllysine; alternate" evidence="2">
    <location>
        <position position="447"/>
    </location>
</feature>
<feature type="modified residue" description="Phosphoserine" evidence="2">
    <location>
        <position position="456"/>
    </location>
</feature>
<feature type="modified residue" description="N6-acetyllysine; alternate" evidence="2">
    <location>
        <position position="473"/>
    </location>
</feature>
<feature type="modified residue" description="N6-succinyllysine; alternate" evidence="2">
    <location>
        <position position="473"/>
    </location>
</feature>
<feature type="modified residue" description="Phosphoserine" evidence="8">
    <location>
        <position position="477"/>
    </location>
</feature>
<feature type="sequence conflict" description="In Ref. 1; AAA41336." evidence="6" ref="1">
    <original>A</original>
    <variation>P</variation>
    <location>
        <position position="205"/>
    </location>
</feature>
<proteinExistence type="evidence at protein level"/>
<sequence>MQRLLAPARRVLQVKRVMQESSLSPAHLLPAAQQRFSTIPPAPLAKTDTWPKDVGILALEVYFPAQYVDQTDLEKFNNVEAGKYTVGLGQTRMGFCSVQEDINSLCLTVVQRLMERTKLPWDAVGRLEVGTETIIDKSKAVKTVLMELFQDSGNTDIEGIDTTNACYGGTASLFNAANWMESSYWDGRYALVVCGDIAVYPSGNARPTGGAGAVAMLIGPKAPLVLEQGLRGTHMENAYDFYKPNLASEYPLVDGKLSIQCYLRALDRCYAAYRRKIQNQWKQAGNNQPFTLDDVQYMIFHTPFCKMVQKSLARLMFNDFLSSSSDKQNNLYKGLEAFKGLKLEETYTNKDVDKALLKASLDMFNKKTKASLYLSTNNGNMYTSSLYGCLASLLSHHSAQELAGSRIGAFSYGSGLAASFFSFRVSKDASPGSPLEKLVSSVSDLPKRLDSRRRMSPEEFTEIMNQREQFYHKVNFSPPGDTSNLFPGTWYLERVDEMHRRKYARRPV</sequence>
<accession>P22791</accession>
<accession>F1M9Q5</accession>
<accession>Q68G44</accession>
<organism>
    <name type="scientific">Rattus norvegicus</name>
    <name type="common">Rat</name>
    <dbReference type="NCBI Taxonomy" id="10116"/>
    <lineage>
        <taxon>Eukaryota</taxon>
        <taxon>Metazoa</taxon>
        <taxon>Chordata</taxon>
        <taxon>Craniata</taxon>
        <taxon>Vertebrata</taxon>
        <taxon>Euteleostomi</taxon>
        <taxon>Mammalia</taxon>
        <taxon>Eutheria</taxon>
        <taxon>Euarchontoglires</taxon>
        <taxon>Glires</taxon>
        <taxon>Rodentia</taxon>
        <taxon>Myomorpha</taxon>
        <taxon>Muroidea</taxon>
        <taxon>Muridae</taxon>
        <taxon>Murinae</taxon>
        <taxon>Rattus</taxon>
    </lineage>
</organism>
<dbReference type="EC" id="2.3.3.10" evidence="1"/>
<dbReference type="EMBL" id="M33648">
    <property type="protein sequence ID" value="AAA41336.1"/>
    <property type="molecule type" value="mRNA"/>
</dbReference>
<dbReference type="EMBL" id="M63800">
    <property type="status" value="NOT_ANNOTATED_CDS"/>
    <property type="molecule type" value="Genomic_DNA"/>
</dbReference>
<dbReference type="EMBL" id="AABR07012623">
    <property type="status" value="NOT_ANNOTATED_CDS"/>
    <property type="molecule type" value="Genomic_DNA"/>
</dbReference>
<dbReference type="EMBL" id="AABR07012624">
    <property type="status" value="NOT_ANNOTATED_CDS"/>
    <property type="molecule type" value="Genomic_DNA"/>
</dbReference>
<dbReference type="EMBL" id="CH474015">
    <property type="protein sequence ID" value="EDL85567.1"/>
    <property type="molecule type" value="Genomic_DNA"/>
</dbReference>
<dbReference type="EMBL" id="CH474015">
    <property type="protein sequence ID" value="EDL85568.1"/>
    <property type="molecule type" value="Genomic_DNA"/>
</dbReference>
<dbReference type="EMBL" id="BC078695">
    <property type="protein sequence ID" value="AAH78695.1"/>
    <property type="molecule type" value="mRNA"/>
</dbReference>
<dbReference type="EMBL" id="BC083543">
    <property type="protein sequence ID" value="AAH83543.1"/>
    <property type="molecule type" value="mRNA"/>
</dbReference>
<dbReference type="PIR" id="A35865">
    <property type="entry name" value="A35865"/>
</dbReference>
<dbReference type="RefSeq" id="NP_775117.2">
    <property type="nucleotide sequence ID" value="NM_173094.2"/>
</dbReference>
<dbReference type="RefSeq" id="XP_006233064.1">
    <property type="nucleotide sequence ID" value="XM_006233002.5"/>
</dbReference>
<dbReference type="SMR" id="P22791"/>
<dbReference type="FunCoup" id="P22791">
    <property type="interactions" value="1085"/>
</dbReference>
<dbReference type="STRING" id="10116.ENSRNOP00000026122"/>
<dbReference type="iPTMnet" id="P22791"/>
<dbReference type="PhosphoSitePlus" id="P22791"/>
<dbReference type="SwissPalm" id="P22791"/>
<dbReference type="PaxDb" id="10116-ENSRNOP00000026122"/>
<dbReference type="Ensembl" id="ENSRNOT00000026121.8">
    <property type="protein sequence ID" value="ENSRNOP00000026122.5"/>
    <property type="gene ID" value="ENSRNOG00000019120.8"/>
</dbReference>
<dbReference type="GeneID" id="24450"/>
<dbReference type="KEGG" id="rno:24450"/>
<dbReference type="UCSC" id="RGD:2804">
    <property type="organism name" value="rat"/>
</dbReference>
<dbReference type="AGR" id="RGD:2804"/>
<dbReference type="CTD" id="3158"/>
<dbReference type="RGD" id="2804">
    <property type="gene designation" value="Hmgcs2"/>
</dbReference>
<dbReference type="eggNOG" id="KOG1393">
    <property type="taxonomic scope" value="Eukaryota"/>
</dbReference>
<dbReference type="GeneTree" id="ENSGT00390000006096"/>
<dbReference type="HOGENOM" id="CLU_008065_0_1_1"/>
<dbReference type="InParanoid" id="P22791"/>
<dbReference type="OMA" id="ARNGNMY"/>
<dbReference type="OrthoDB" id="15330at9989"/>
<dbReference type="PhylomeDB" id="P22791"/>
<dbReference type="TreeFam" id="TF105361"/>
<dbReference type="BRENDA" id="2.3.3.10">
    <property type="organism ID" value="5301"/>
</dbReference>
<dbReference type="Reactome" id="R-RNO-77111">
    <property type="pathway name" value="Synthesis of Ketone Bodies"/>
</dbReference>
<dbReference type="Reactome" id="R-RNO-9837999">
    <property type="pathway name" value="Mitochondrial protein degradation"/>
</dbReference>
<dbReference type="UniPathway" id="UPA00058">
    <property type="reaction ID" value="UER00102"/>
</dbReference>
<dbReference type="PRO" id="PR:P22791"/>
<dbReference type="Proteomes" id="UP000002494">
    <property type="component" value="Chromosome 2"/>
</dbReference>
<dbReference type="Proteomes" id="UP000234681">
    <property type="component" value="Chromosome 2"/>
</dbReference>
<dbReference type="Bgee" id="ENSRNOG00000019120">
    <property type="expression patterns" value="Expressed in liver and 19 other cell types or tissues"/>
</dbReference>
<dbReference type="GO" id="GO:0005759">
    <property type="term" value="C:mitochondrial matrix"/>
    <property type="evidence" value="ECO:0000314"/>
    <property type="project" value="RGD"/>
</dbReference>
<dbReference type="GO" id="GO:0005739">
    <property type="term" value="C:mitochondrion"/>
    <property type="evidence" value="ECO:0000266"/>
    <property type="project" value="RGD"/>
</dbReference>
<dbReference type="GO" id="GO:0004421">
    <property type="term" value="F:hydroxymethylglutaryl-CoA synthase activity"/>
    <property type="evidence" value="ECO:0000314"/>
    <property type="project" value="RGD"/>
</dbReference>
<dbReference type="GO" id="GO:0042802">
    <property type="term" value="F:identical protein binding"/>
    <property type="evidence" value="ECO:0000250"/>
    <property type="project" value="UniProtKB"/>
</dbReference>
<dbReference type="GO" id="GO:0006084">
    <property type="term" value="P:acetyl-CoA metabolic process"/>
    <property type="evidence" value="ECO:0000266"/>
    <property type="project" value="RGD"/>
</dbReference>
<dbReference type="GO" id="GO:0060612">
    <property type="term" value="P:adipose tissue development"/>
    <property type="evidence" value="ECO:0000270"/>
    <property type="project" value="RGD"/>
</dbReference>
<dbReference type="GO" id="GO:0071230">
    <property type="term" value="P:cellular response to amino acid stimulus"/>
    <property type="evidence" value="ECO:0000270"/>
    <property type="project" value="RGD"/>
</dbReference>
<dbReference type="GO" id="GO:0071398">
    <property type="term" value="P:cellular response to fatty acid"/>
    <property type="evidence" value="ECO:0000270"/>
    <property type="project" value="RGD"/>
</dbReference>
<dbReference type="GO" id="GO:0071385">
    <property type="term" value="P:cellular response to glucocorticoid stimulus"/>
    <property type="evidence" value="ECO:0000270"/>
    <property type="project" value="RGD"/>
</dbReference>
<dbReference type="GO" id="GO:0032870">
    <property type="term" value="P:cellular response to hormone stimulus"/>
    <property type="evidence" value="ECO:0000270"/>
    <property type="project" value="RGD"/>
</dbReference>
<dbReference type="GO" id="GO:0032869">
    <property type="term" value="P:cellular response to insulin stimulus"/>
    <property type="evidence" value="ECO:0000270"/>
    <property type="project" value="RGD"/>
</dbReference>
<dbReference type="GO" id="GO:0071222">
    <property type="term" value="P:cellular response to lipopolysaccharide"/>
    <property type="evidence" value="ECO:0000270"/>
    <property type="project" value="RGD"/>
</dbReference>
<dbReference type="GO" id="GO:0006695">
    <property type="term" value="P:cholesterol biosynthetic process"/>
    <property type="evidence" value="ECO:0007669"/>
    <property type="project" value="UniProtKB-KW"/>
</dbReference>
<dbReference type="GO" id="GO:0010142">
    <property type="term" value="P:farnesyl diphosphate biosynthetic process, mevalonate pathway"/>
    <property type="evidence" value="ECO:0000318"/>
    <property type="project" value="GO_Central"/>
</dbReference>
<dbReference type="GO" id="GO:0046951">
    <property type="term" value="P:ketone body biosynthetic process"/>
    <property type="evidence" value="ECO:0000270"/>
    <property type="project" value="RGD"/>
</dbReference>
<dbReference type="GO" id="GO:0001822">
    <property type="term" value="P:kidney development"/>
    <property type="evidence" value="ECO:0000270"/>
    <property type="project" value="RGD"/>
</dbReference>
<dbReference type="GO" id="GO:0001889">
    <property type="term" value="P:liver development"/>
    <property type="evidence" value="ECO:0000270"/>
    <property type="project" value="RGD"/>
</dbReference>
<dbReference type="GO" id="GO:0030324">
    <property type="term" value="P:lung development"/>
    <property type="evidence" value="ECO:0000270"/>
    <property type="project" value="RGD"/>
</dbReference>
<dbReference type="GO" id="GO:0007494">
    <property type="term" value="P:midgut development"/>
    <property type="evidence" value="ECO:0000270"/>
    <property type="project" value="RGD"/>
</dbReference>
<dbReference type="GO" id="GO:0033555">
    <property type="term" value="P:multicellular organismal response to stress"/>
    <property type="evidence" value="ECO:0000270"/>
    <property type="project" value="RGD"/>
</dbReference>
<dbReference type="GO" id="GO:0009617">
    <property type="term" value="P:response to bacterium"/>
    <property type="evidence" value="ECO:0000270"/>
    <property type="project" value="RGD"/>
</dbReference>
<dbReference type="GO" id="GO:0051591">
    <property type="term" value="P:response to cAMP"/>
    <property type="evidence" value="ECO:0000270"/>
    <property type="project" value="RGD"/>
</dbReference>
<dbReference type="GO" id="GO:0045471">
    <property type="term" value="P:response to ethanol"/>
    <property type="evidence" value="ECO:0000270"/>
    <property type="project" value="RGD"/>
</dbReference>
<dbReference type="GO" id="GO:0070542">
    <property type="term" value="P:response to fatty acid"/>
    <property type="evidence" value="ECO:0000270"/>
    <property type="project" value="RGD"/>
</dbReference>
<dbReference type="GO" id="GO:0033762">
    <property type="term" value="P:response to glucagon"/>
    <property type="evidence" value="ECO:0000270"/>
    <property type="project" value="RGD"/>
</dbReference>
<dbReference type="GO" id="GO:0051384">
    <property type="term" value="P:response to glucocorticoid"/>
    <property type="evidence" value="ECO:0000270"/>
    <property type="project" value="RGD"/>
</dbReference>
<dbReference type="GO" id="GO:0060416">
    <property type="term" value="P:response to growth hormone"/>
    <property type="evidence" value="ECO:0000270"/>
    <property type="project" value="RGD"/>
</dbReference>
<dbReference type="GO" id="GO:0032868">
    <property type="term" value="P:response to insulin"/>
    <property type="evidence" value="ECO:0000270"/>
    <property type="project" value="RGD"/>
</dbReference>
<dbReference type="GO" id="GO:0070543">
    <property type="term" value="P:response to linoleic acid"/>
    <property type="evidence" value="ECO:0000270"/>
    <property type="project" value="RGD"/>
</dbReference>
<dbReference type="GO" id="GO:0010038">
    <property type="term" value="P:response to metal ion"/>
    <property type="evidence" value="ECO:0000270"/>
    <property type="project" value="RGD"/>
</dbReference>
<dbReference type="GO" id="GO:0034284">
    <property type="term" value="P:response to monosaccharide"/>
    <property type="evidence" value="ECO:0000270"/>
    <property type="project" value="RGD"/>
</dbReference>
<dbReference type="GO" id="GO:0007584">
    <property type="term" value="P:response to nutrient"/>
    <property type="evidence" value="ECO:0000270"/>
    <property type="project" value="RGD"/>
</dbReference>
<dbReference type="GO" id="GO:0043434">
    <property type="term" value="P:response to peptide hormone"/>
    <property type="evidence" value="ECO:0000270"/>
    <property type="project" value="RGD"/>
</dbReference>
<dbReference type="GO" id="GO:0034696">
    <property type="term" value="P:response to prostaglandin F"/>
    <property type="evidence" value="ECO:0000270"/>
    <property type="project" value="RGD"/>
</dbReference>
<dbReference type="GO" id="GO:0042594">
    <property type="term" value="P:response to starvation"/>
    <property type="evidence" value="ECO:0000270"/>
    <property type="project" value="RGD"/>
</dbReference>
<dbReference type="GO" id="GO:0009266">
    <property type="term" value="P:response to temperature stimulus"/>
    <property type="evidence" value="ECO:0000270"/>
    <property type="project" value="RGD"/>
</dbReference>
<dbReference type="GO" id="GO:0033574">
    <property type="term" value="P:response to testosterone"/>
    <property type="evidence" value="ECO:0000270"/>
    <property type="project" value="RGD"/>
</dbReference>
<dbReference type="GO" id="GO:0034014">
    <property type="term" value="P:response to triglyceride"/>
    <property type="evidence" value="ECO:0000270"/>
    <property type="project" value="RGD"/>
</dbReference>
<dbReference type="GO" id="GO:0009410">
    <property type="term" value="P:response to xenobiotic stimulus"/>
    <property type="evidence" value="ECO:0000270"/>
    <property type="project" value="RGD"/>
</dbReference>
<dbReference type="CDD" id="cd00827">
    <property type="entry name" value="init_cond_enzymes"/>
    <property type="match status" value="1"/>
</dbReference>
<dbReference type="FunFam" id="3.40.47.10:FF:000008">
    <property type="entry name" value="3-hydroxy-3-methylglutaryl coenzyme A synthase"/>
    <property type="match status" value="1"/>
</dbReference>
<dbReference type="Gene3D" id="3.40.47.10">
    <property type="match status" value="1"/>
</dbReference>
<dbReference type="InterPro" id="IPR000590">
    <property type="entry name" value="HMG_CoA_synt_AS"/>
</dbReference>
<dbReference type="InterPro" id="IPR013746">
    <property type="entry name" value="HMG_CoA_synt_C_dom"/>
</dbReference>
<dbReference type="InterPro" id="IPR013528">
    <property type="entry name" value="HMG_CoA_synth_N"/>
</dbReference>
<dbReference type="InterPro" id="IPR010122">
    <property type="entry name" value="HMG_CoA_synthase_euk"/>
</dbReference>
<dbReference type="InterPro" id="IPR016039">
    <property type="entry name" value="Thiolase-like"/>
</dbReference>
<dbReference type="NCBIfam" id="TIGR01833">
    <property type="entry name" value="HMG-CoA-S_euk"/>
    <property type="match status" value="1"/>
</dbReference>
<dbReference type="PANTHER" id="PTHR43323">
    <property type="entry name" value="3-HYDROXY-3-METHYLGLUTARYL COENZYME A SYNTHASE"/>
    <property type="match status" value="1"/>
</dbReference>
<dbReference type="PANTHER" id="PTHR43323:SF1">
    <property type="entry name" value="HYDROXYMETHYLGLUTARYL-COA SYNTHASE, MITOCHONDRIAL"/>
    <property type="match status" value="1"/>
</dbReference>
<dbReference type="Pfam" id="PF08540">
    <property type="entry name" value="HMG_CoA_synt_C"/>
    <property type="match status" value="1"/>
</dbReference>
<dbReference type="Pfam" id="PF01154">
    <property type="entry name" value="HMG_CoA_synt_N"/>
    <property type="match status" value="1"/>
</dbReference>
<dbReference type="SUPFAM" id="SSF53901">
    <property type="entry name" value="Thiolase-like"/>
    <property type="match status" value="2"/>
</dbReference>
<dbReference type="PROSITE" id="PS01226">
    <property type="entry name" value="HMG_COA_SYNTHASE"/>
    <property type="match status" value="1"/>
</dbReference>
<comment type="function">
    <text evidence="1">Catalyzes the first irreversible step in ketogenesis, condensing acetyl-CoA to acetoacetyl-CoA to form HMG-CoA, which is converted by HMG-CoA reductase (HMGCR) into mevalonate.</text>
</comment>
<comment type="catalytic activity">
    <reaction evidence="1">
        <text>acetoacetyl-CoA + acetyl-CoA + H2O = (3S)-3-hydroxy-3-methylglutaryl-CoA + CoA + H(+)</text>
        <dbReference type="Rhea" id="RHEA:10188"/>
        <dbReference type="ChEBI" id="CHEBI:15377"/>
        <dbReference type="ChEBI" id="CHEBI:15378"/>
        <dbReference type="ChEBI" id="CHEBI:43074"/>
        <dbReference type="ChEBI" id="CHEBI:57286"/>
        <dbReference type="ChEBI" id="CHEBI:57287"/>
        <dbReference type="ChEBI" id="CHEBI:57288"/>
        <dbReference type="EC" id="2.3.3.10"/>
    </reaction>
    <physiologicalReaction direction="left-to-right" evidence="1">
        <dbReference type="Rhea" id="RHEA:10189"/>
    </physiologicalReaction>
</comment>
<comment type="pathway">
    <text evidence="6">Metabolic intermediate biosynthesis; (R)-mevalonate biosynthesis; (R)-mevalonate from acetyl-CoA: step 2/3.</text>
</comment>
<comment type="subunit">
    <text evidence="1">Homodimer.</text>
</comment>
<comment type="subcellular location">
    <subcellularLocation>
        <location evidence="7">Mitochondrion</location>
    </subcellularLocation>
</comment>
<comment type="tissue specificity">
    <text evidence="5">Liver and kidney.</text>
</comment>
<comment type="PTM">
    <text evidence="2">Succinylated. Desuccinylated by SIRT5. Succinylation, at least at Lys-83 and Lys-310, inhibits the enzymatic activity.</text>
</comment>
<comment type="similarity">
    <text evidence="6">Belongs to the thiolase-like superfamily. HMG-CoA synthase family.</text>
</comment>